<feature type="chain" id="PRO_0000279040" description="Transposon Ty1-DR2 Gag polyprotein">
    <location>
        <begin position="1"/>
        <end position="440"/>
    </location>
</feature>
<feature type="chain" id="PRO_0000279041" description="Capsid protein" evidence="1">
    <location>
        <begin position="1"/>
        <end position="401"/>
    </location>
</feature>
<feature type="peptide" id="PRO_0000279042" description="Gag-p4" evidence="1">
    <location>
        <begin position="402"/>
        <end position="440"/>
    </location>
</feature>
<feature type="region of interest" description="Disordered" evidence="2">
    <location>
        <begin position="1"/>
        <end position="75"/>
    </location>
</feature>
<feature type="region of interest" description="Disordered" evidence="2">
    <location>
        <begin position="137"/>
        <end position="174"/>
    </location>
</feature>
<feature type="region of interest" description="RNA-binding" evidence="1">
    <location>
        <begin position="299"/>
        <end position="401"/>
    </location>
</feature>
<feature type="region of interest" description="Disordered" evidence="2">
    <location>
        <begin position="350"/>
        <end position="440"/>
    </location>
</feature>
<feature type="compositionally biased region" description="Polar residues" evidence="2">
    <location>
        <begin position="1"/>
        <end position="31"/>
    </location>
</feature>
<feature type="compositionally biased region" description="Polar residues" evidence="2">
    <location>
        <begin position="137"/>
        <end position="168"/>
    </location>
</feature>
<feature type="compositionally biased region" description="Basic and acidic residues" evidence="2">
    <location>
        <begin position="363"/>
        <end position="372"/>
    </location>
</feature>
<feature type="compositionally biased region" description="Polar residues" evidence="2">
    <location>
        <begin position="373"/>
        <end position="409"/>
    </location>
</feature>
<feature type="compositionally biased region" description="Basic and acidic residues" evidence="2">
    <location>
        <begin position="429"/>
        <end position="440"/>
    </location>
</feature>
<feature type="site" description="Cleavage; by Ty1 protease" evidence="1">
    <location>
        <begin position="401"/>
        <end position="402"/>
    </location>
</feature>
<accession>Q03964</accession>
<accession>D6VSF2</accession>
<name>YD17A_YEAST</name>
<gene>
    <name type="primary">TY1A-DR2</name>
    <name type="ordered locus">YDR170W-A</name>
    <name type="ORF">YD9395.02</name>
</gene>
<comment type="function">
    <text evidence="1">Capsid protein (CA) is the structural component of the virus-like particle (VLP), forming the shell that encapsulates the retrotransposons dimeric RNA genome. The particles are assembled from trimer-clustered units and there are holes in the capsid shells that allow for the diffusion of macromolecules. CA also has nucleocapsid-like chaperone activity, promoting primer tRNA(i)-Met annealing to the multipartite primer-binding site (PBS), dimerization of Ty1 RNA and initiation of reverse transcription (By similarity).</text>
</comment>
<comment type="subunit">
    <text evidence="1">Homotrimer.</text>
</comment>
<comment type="subcellular location">
    <subcellularLocation>
        <location evidence="1">Cytoplasm</location>
    </subcellularLocation>
</comment>
<comment type="domain">
    <text evidence="1">The C-terminal RNA-binding region of CA is sufficient for all its nucleocapsid-like chaperone activities.</text>
</comment>
<comment type="miscellaneous">
    <text>Retrotransposons are mobile genetic entities that are able to replicate via an RNA intermediate and a reverse transcription step. In contrast to retroviruses, retrotransposons are non-infectious, lack an envelope and remain intracellular. Ty1 retrotransposons belong to the copia elements (pseudoviridae).</text>
</comment>
<evidence type="ECO:0000250" key="1"/>
<evidence type="ECO:0000256" key="2">
    <source>
        <dbReference type="SAM" id="MobiDB-lite"/>
    </source>
</evidence>
<proteinExistence type="inferred from homology"/>
<organism>
    <name type="scientific">Saccharomyces cerevisiae (strain ATCC 204508 / S288c)</name>
    <name type="common">Baker's yeast</name>
    <dbReference type="NCBI Taxonomy" id="559292"/>
    <lineage>
        <taxon>Eukaryota</taxon>
        <taxon>Fungi</taxon>
        <taxon>Dikarya</taxon>
        <taxon>Ascomycota</taxon>
        <taxon>Saccharomycotina</taxon>
        <taxon>Saccharomycetes</taxon>
        <taxon>Saccharomycetales</taxon>
        <taxon>Saccharomycetaceae</taxon>
        <taxon>Saccharomyces</taxon>
    </lineage>
</organism>
<keyword id="KW-0963">Cytoplasm</keyword>
<keyword id="KW-1185">Reference proteome</keyword>
<keyword id="KW-0694">RNA-binding</keyword>
<keyword id="KW-0814">Transposable element</keyword>
<dbReference type="EMBL" id="Z46727">
    <property type="protein sequence ID" value="CAA86697.1"/>
    <property type="molecule type" value="Genomic_DNA"/>
</dbReference>
<dbReference type="EMBL" id="BK006938">
    <property type="protein sequence ID" value="DAA12012.1"/>
    <property type="molecule type" value="Genomic_DNA"/>
</dbReference>
<dbReference type="PIR" id="S49765">
    <property type="entry name" value="S49765"/>
</dbReference>
<dbReference type="RefSeq" id="NP_010455.1">
    <property type="nucleotide sequence ID" value="NM_001184320.1"/>
</dbReference>
<dbReference type="SMR" id="Q03964"/>
<dbReference type="BioGRID" id="32223">
    <property type="interactions" value="10"/>
</dbReference>
<dbReference type="DIP" id="DIP-8799N"/>
<dbReference type="FunCoup" id="Q03964">
    <property type="interactions" value="97"/>
</dbReference>
<dbReference type="IntAct" id="Q03964">
    <property type="interactions" value="5"/>
</dbReference>
<dbReference type="GlyGen" id="Q03964">
    <property type="glycosylation" value="1 site"/>
</dbReference>
<dbReference type="iPTMnet" id="Q03964"/>
<dbReference type="PaxDb" id="4932-YDR170W-A"/>
<dbReference type="PeptideAtlas" id="Q03964"/>
<dbReference type="GeneID" id="851750"/>
<dbReference type="KEGG" id="sce:YDR170W-A"/>
<dbReference type="AGR" id="SGD:S000007227"/>
<dbReference type="SGD" id="S000007227">
    <property type="gene designation" value="YDR170W-A"/>
</dbReference>
<dbReference type="VEuPathDB" id="FungiDB:YDR170W-A"/>
<dbReference type="eggNOG" id="KOG0017">
    <property type="taxonomic scope" value="Eukaryota"/>
</dbReference>
<dbReference type="HOGENOM" id="CLU_045291_1_0_1"/>
<dbReference type="InParanoid" id="Q03964"/>
<dbReference type="OrthoDB" id="4045174at2759"/>
<dbReference type="PRO" id="PR:Q03964"/>
<dbReference type="Proteomes" id="UP000002311">
    <property type="component" value="Chromosome IV"/>
</dbReference>
<dbReference type="RNAct" id="Q03964">
    <property type="molecule type" value="protein"/>
</dbReference>
<dbReference type="GO" id="GO:0005737">
    <property type="term" value="C:cytoplasm"/>
    <property type="evidence" value="ECO:0007005"/>
    <property type="project" value="SGD"/>
</dbReference>
<dbReference type="GO" id="GO:0003723">
    <property type="term" value="F:RNA binding"/>
    <property type="evidence" value="ECO:0007669"/>
    <property type="project" value="UniProtKB-KW"/>
</dbReference>
<dbReference type="InterPro" id="IPR015820">
    <property type="entry name" value="TYA"/>
</dbReference>
<dbReference type="Pfam" id="PF01021">
    <property type="entry name" value="TYA"/>
    <property type="match status" value="1"/>
</dbReference>
<sequence length="440" mass="49445">MESQQLSQHSPISHGSACASVTSKEVQTTQDPLDISASKTEECEKVFTQANSQQPTTPPSAAVPENHHHASPQAAQVPLPQNGPYPQQRMMTPQQANISGWPVYGHPSLMPYPPYQMSPMYAPPGAQSQFTQYPQYVGTHLNTPSPESGNSFPDSSSAKSNMTSTNQHVRPPPILTSPNDFLNWVKIYIKFLQNSNLGDIIPTATRKAVRQMTDDELTFLCHTFQLFALSQFLPTWVKDILSVDYTDIMKILSKSINKMQSDTQEVNDITTLANLHYNGSTPADAFEAEVTNILDRLKNNGIPINNKVACQFIMRGLSGEYKFLRYARHRYIHMTVADLFSDIHSMYEEQQESKRNKSTYRRSPSDEKKDSRTYTNTTKPKSITRNSQKPNNSQSRTARAHNVSTSNNFPGPDNDLIRGSTTEPIQLKNKHDLHLRPGTY</sequence>
<protein>
    <recommendedName>
        <fullName>Transposon Ty1-DR2 Gag polyprotein</fullName>
    </recommendedName>
    <alternativeName>
        <fullName>Gag-p49</fullName>
    </alternativeName>
    <alternativeName>
        <fullName>Transposon Ty1 protein A</fullName>
        <shortName>TY1A</shortName>
        <shortName>TYA</shortName>
    </alternativeName>
    <alternativeName>
        <fullName>p58</fullName>
    </alternativeName>
    <component>
        <recommendedName>
            <fullName>Capsid protein</fullName>
            <shortName>CA</shortName>
        </recommendedName>
        <alternativeName>
            <fullName>Gag-p45</fullName>
        </alternativeName>
        <alternativeName>
            <fullName>p54</fullName>
        </alternativeName>
    </component>
    <component>
        <recommendedName>
            <fullName>Gag-p4</fullName>
        </recommendedName>
    </component>
</protein>
<reference key="1">
    <citation type="journal article" date="1997" name="Nature">
        <title>The nucleotide sequence of Saccharomyces cerevisiae chromosome IV.</title>
        <authorList>
            <person name="Jacq C."/>
            <person name="Alt-Moerbe J."/>
            <person name="Andre B."/>
            <person name="Arnold W."/>
            <person name="Bahr A."/>
            <person name="Ballesta J.P.G."/>
            <person name="Bargues M."/>
            <person name="Baron L."/>
            <person name="Becker A."/>
            <person name="Biteau N."/>
            <person name="Bloecker H."/>
            <person name="Blugeon C."/>
            <person name="Boskovic J."/>
            <person name="Brandt P."/>
            <person name="Brueckner M."/>
            <person name="Buitrago M.J."/>
            <person name="Coster F."/>
            <person name="Delaveau T."/>
            <person name="del Rey F."/>
            <person name="Dujon B."/>
            <person name="Eide L.G."/>
            <person name="Garcia-Cantalejo J.M."/>
            <person name="Goffeau A."/>
            <person name="Gomez-Peris A."/>
            <person name="Granotier C."/>
            <person name="Hanemann V."/>
            <person name="Hankeln T."/>
            <person name="Hoheisel J.D."/>
            <person name="Jaeger W."/>
            <person name="Jimenez A."/>
            <person name="Jonniaux J.-L."/>
            <person name="Kraemer C."/>
            <person name="Kuester H."/>
            <person name="Laamanen P."/>
            <person name="Legros Y."/>
            <person name="Louis E.J."/>
            <person name="Moeller-Rieker S."/>
            <person name="Monnet A."/>
            <person name="Moro M."/>
            <person name="Mueller-Auer S."/>
            <person name="Nussbaumer B."/>
            <person name="Paricio N."/>
            <person name="Paulin L."/>
            <person name="Perea J."/>
            <person name="Perez-Alonso M."/>
            <person name="Perez-Ortin J.E."/>
            <person name="Pohl T.M."/>
            <person name="Prydz H."/>
            <person name="Purnelle B."/>
            <person name="Rasmussen S.W."/>
            <person name="Remacha M.A."/>
            <person name="Revuelta J.L."/>
            <person name="Rieger M."/>
            <person name="Salom D."/>
            <person name="Saluz H.P."/>
            <person name="Saiz J.E."/>
            <person name="Saren A.-M."/>
            <person name="Schaefer M."/>
            <person name="Scharfe M."/>
            <person name="Schmidt E.R."/>
            <person name="Schneider C."/>
            <person name="Scholler P."/>
            <person name="Schwarz S."/>
            <person name="Soler-Mira A."/>
            <person name="Urrestarazu L.A."/>
            <person name="Verhasselt P."/>
            <person name="Vissers S."/>
            <person name="Voet M."/>
            <person name="Volckaert G."/>
            <person name="Wagner G."/>
            <person name="Wambutt R."/>
            <person name="Wedler E."/>
            <person name="Wedler H."/>
            <person name="Woelfl S."/>
            <person name="Harris D.E."/>
            <person name="Bowman S."/>
            <person name="Brown D."/>
            <person name="Churcher C.M."/>
            <person name="Connor R."/>
            <person name="Dedman K."/>
            <person name="Gentles S."/>
            <person name="Hamlin N."/>
            <person name="Hunt S."/>
            <person name="Jones L."/>
            <person name="McDonald S."/>
            <person name="Murphy L.D."/>
            <person name="Niblett D."/>
            <person name="Odell C."/>
            <person name="Oliver K."/>
            <person name="Rajandream M.A."/>
            <person name="Richards C."/>
            <person name="Shore L."/>
            <person name="Walsh S.V."/>
            <person name="Barrell B.G."/>
            <person name="Dietrich F.S."/>
            <person name="Mulligan J.T."/>
            <person name="Allen E."/>
            <person name="Araujo R."/>
            <person name="Aviles E."/>
            <person name="Berno A."/>
            <person name="Carpenter J."/>
            <person name="Chen E."/>
            <person name="Cherry J.M."/>
            <person name="Chung E."/>
            <person name="Duncan M."/>
            <person name="Hunicke-Smith S."/>
            <person name="Hyman R.W."/>
            <person name="Komp C."/>
            <person name="Lashkari D."/>
            <person name="Lew H."/>
            <person name="Lin D."/>
            <person name="Mosedale D."/>
            <person name="Nakahara K."/>
            <person name="Namath A."/>
            <person name="Oefner P."/>
            <person name="Oh C."/>
            <person name="Petel F.X."/>
            <person name="Roberts D."/>
            <person name="Schramm S."/>
            <person name="Schroeder M."/>
            <person name="Shogren T."/>
            <person name="Shroff N."/>
            <person name="Winant A."/>
            <person name="Yelton M.A."/>
            <person name="Botstein D."/>
            <person name="Davis R.W."/>
            <person name="Johnston M."/>
            <person name="Andrews S."/>
            <person name="Brinkman R."/>
            <person name="Cooper J."/>
            <person name="Ding H."/>
            <person name="Du Z."/>
            <person name="Favello A."/>
            <person name="Fulton L."/>
            <person name="Gattung S."/>
            <person name="Greco T."/>
            <person name="Hallsworth K."/>
            <person name="Hawkins J."/>
            <person name="Hillier L.W."/>
            <person name="Jier M."/>
            <person name="Johnson D."/>
            <person name="Johnston L."/>
            <person name="Kirsten J."/>
            <person name="Kucaba T."/>
            <person name="Langston Y."/>
            <person name="Latreille P."/>
            <person name="Le T."/>
            <person name="Mardis E."/>
            <person name="Menezes S."/>
            <person name="Miller N."/>
            <person name="Nhan M."/>
            <person name="Pauley A."/>
            <person name="Peluso D."/>
            <person name="Rifkin L."/>
            <person name="Riles L."/>
            <person name="Taich A."/>
            <person name="Trevaskis E."/>
            <person name="Vignati D."/>
            <person name="Wilcox L."/>
            <person name="Wohldman P."/>
            <person name="Vaudin M."/>
            <person name="Wilson R."/>
            <person name="Waterston R."/>
            <person name="Albermann K."/>
            <person name="Hani J."/>
            <person name="Heumann K."/>
            <person name="Kleine K."/>
            <person name="Mewes H.-W."/>
            <person name="Zollner A."/>
            <person name="Zaccaria P."/>
        </authorList>
    </citation>
    <scope>NUCLEOTIDE SEQUENCE [LARGE SCALE GENOMIC DNA]</scope>
    <source>
        <strain>ATCC 204508 / S288c</strain>
    </source>
</reference>
<reference key="2">
    <citation type="journal article" date="2014" name="G3 (Bethesda)">
        <title>The reference genome sequence of Saccharomyces cerevisiae: Then and now.</title>
        <authorList>
            <person name="Engel S.R."/>
            <person name="Dietrich F.S."/>
            <person name="Fisk D.G."/>
            <person name="Binkley G."/>
            <person name="Balakrishnan R."/>
            <person name="Costanzo M.C."/>
            <person name="Dwight S.S."/>
            <person name="Hitz B.C."/>
            <person name="Karra K."/>
            <person name="Nash R.S."/>
            <person name="Weng S."/>
            <person name="Wong E.D."/>
            <person name="Lloyd P."/>
            <person name="Skrzypek M.S."/>
            <person name="Miyasato S.R."/>
            <person name="Simison M."/>
            <person name="Cherry J.M."/>
        </authorList>
    </citation>
    <scope>GENOME REANNOTATION</scope>
    <source>
        <strain>ATCC 204508 / S288c</strain>
    </source>
</reference>